<organism>
    <name type="scientific">Homo sapiens</name>
    <name type="common">Human</name>
    <dbReference type="NCBI Taxonomy" id="9606"/>
    <lineage>
        <taxon>Eukaryota</taxon>
        <taxon>Metazoa</taxon>
        <taxon>Chordata</taxon>
        <taxon>Craniata</taxon>
        <taxon>Vertebrata</taxon>
        <taxon>Euteleostomi</taxon>
        <taxon>Mammalia</taxon>
        <taxon>Eutheria</taxon>
        <taxon>Euarchontoglires</taxon>
        <taxon>Primates</taxon>
        <taxon>Haplorrhini</taxon>
        <taxon>Catarrhini</taxon>
        <taxon>Hominidae</taxon>
        <taxon>Homo</taxon>
    </lineage>
</organism>
<proteinExistence type="evidence at protein level"/>
<keyword id="KW-0024">Alternative initiation</keyword>
<keyword id="KW-0472">Membrane</keyword>
<keyword id="KW-0597">Phosphoprotein</keyword>
<keyword id="KW-1267">Proteomics identification</keyword>
<keyword id="KW-1185">Reference proteome</keyword>
<keyword id="KW-0812">Transmembrane</keyword>
<keyword id="KW-1133">Transmembrane helix</keyword>
<protein>
    <recommendedName>
        <fullName>Transmembrane protein 181</fullName>
    </recommendedName>
</protein>
<sequence length="475" mass="55015">MEPLAPMRLYTLSKRHFVLVFVVFFICFGLTIFVGIRGPKVIQTSAANFSLNNSKKLKPIQILSNPLSTYNQQLWLTCVVELDQSKETSIKTSFPMTVKVDGVAQDGTTMYIHNKVHNRTRTLTCAGKCAEIIVAHLGYLNYTQYTVIVGFEHLKLPIKGMNFTWKTYNPAFSRLEIWFRFFFVVLTFIVTCLFAHSLRKFSMRDWGIEQKWMSVLLPLLLLYNDPFFPLSFLVNSWLPGMLDDLFQSMFLCALLLFWLCVYHGIRVQGERKCLTFYLPKFFIVGLLWLASVTLGIWQTVNELHDPMYQYRVDTGNFQGMKVFFMVVAAVYILYLLFLIVRACSELRHMPYVDLRLKFLTALTFVVLVISIAILYLRFGAQVLQDNFVAELSTHYQNSAEFLSFYGLLNFYLYTLAFVYSPSKNALYESQLKDNPAFSMLNDSDDDVIYGSDYEEMPLQNGQAIRAKYKEESDSD</sequence>
<evidence type="ECO:0000255" key="1"/>
<evidence type="ECO:0000269" key="2">
    <source>
    </source>
</evidence>
<evidence type="ECO:0000305" key="3"/>
<evidence type="ECO:0007744" key="4">
    <source>
    </source>
</evidence>
<evidence type="ECO:0007744" key="5">
    <source>
    </source>
</evidence>
<evidence type="ECO:0007744" key="6">
    <source>
    </source>
</evidence>
<feature type="chain" id="PRO_0000239661" description="Transmembrane protein 181">
    <location>
        <begin position="1"/>
        <end position="475"/>
    </location>
</feature>
<feature type="transmembrane region" description="Helical" evidence="1">
    <location>
        <begin position="16"/>
        <end position="36"/>
    </location>
</feature>
<feature type="transmembrane region" description="Helical" evidence="1">
    <location>
        <begin position="131"/>
        <end position="151"/>
    </location>
</feature>
<feature type="transmembrane region" description="Helical" evidence="1">
    <location>
        <begin position="175"/>
        <end position="195"/>
    </location>
</feature>
<feature type="transmembrane region" description="Helical" evidence="1">
    <location>
        <begin position="214"/>
        <end position="234"/>
    </location>
</feature>
<feature type="transmembrane region" description="Helical" evidence="1">
    <location>
        <begin position="245"/>
        <end position="265"/>
    </location>
</feature>
<feature type="transmembrane region" description="Helical" evidence="1">
    <location>
        <begin position="276"/>
        <end position="296"/>
    </location>
</feature>
<feature type="transmembrane region" description="Helical" evidence="1">
    <location>
        <begin position="320"/>
        <end position="340"/>
    </location>
</feature>
<feature type="transmembrane region" description="Helical" evidence="1">
    <location>
        <begin position="356"/>
        <end position="376"/>
    </location>
</feature>
<feature type="transmembrane region" description="Helical" evidence="1">
    <location>
        <begin position="401"/>
        <end position="421"/>
    </location>
</feature>
<feature type="modified residue" description="Phosphoserine" evidence="4 5 6">
    <location>
        <position position="443"/>
    </location>
</feature>
<feature type="splice variant" id="VSP_062201" description="In isoform 1.">
    <original>MEP</original>
    <variation>MDAEYPAFEPPLCSELKHLCRRLREAYRELKEDLTPFKDDRYYR</variation>
    <location>
        <begin position="1"/>
        <end position="3"/>
    </location>
</feature>
<name>TM181_HUMAN</name>
<dbReference type="EMBL" id="AB037844">
    <property type="protein sequence ID" value="BAA92661.1"/>
    <property type="status" value="ALT_INIT"/>
    <property type="molecule type" value="mRNA"/>
</dbReference>
<dbReference type="EMBL" id="AL591025">
    <property type="status" value="NOT_ANNOTATED_CDS"/>
    <property type="molecule type" value="Genomic_DNA"/>
</dbReference>
<dbReference type="CCDS" id="CCDS43520.2">
    <molecule id="Q9P2C4-1"/>
</dbReference>
<dbReference type="CCDS" id="CCDS94026.1">
    <molecule id="Q9P2C4-2"/>
</dbReference>
<dbReference type="RefSeq" id="NP_001363781.1">
    <molecule id="Q9P2C4-2"/>
    <property type="nucleotide sequence ID" value="NM_001376852.1"/>
</dbReference>
<dbReference type="RefSeq" id="NP_065874.2">
    <molecule id="Q9P2C4-1"/>
    <property type="nucleotide sequence ID" value="NM_020823.2"/>
</dbReference>
<dbReference type="RefSeq" id="XP_005267131.1">
    <property type="nucleotide sequence ID" value="XM_005267074.3"/>
</dbReference>
<dbReference type="SMR" id="Q9P2C4"/>
<dbReference type="BioGRID" id="121635">
    <property type="interactions" value="33"/>
</dbReference>
<dbReference type="FunCoup" id="Q9P2C4">
    <property type="interactions" value="406"/>
</dbReference>
<dbReference type="IntAct" id="Q9P2C4">
    <property type="interactions" value="13"/>
</dbReference>
<dbReference type="MINT" id="Q9P2C4"/>
<dbReference type="STRING" id="9606.ENSP00000356057"/>
<dbReference type="TCDB" id="8.A.56.1.5">
    <property type="family name" value="the wntless protein (wls) family"/>
</dbReference>
<dbReference type="iPTMnet" id="Q9P2C4"/>
<dbReference type="PhosphoSitePlus" id="Q9P2C4"/>
<dbReference type="SwissPalm" id="Q9P2C4"/>
<dbReference type="BioMuta" id="TMEM181"/>
<dbReference type="DMDM" id="108935999"/>
<dbReference type="jPOST" id="Q9P2C4"/>
<dbReference type="MassIVE" id="Q9P2C4"/>
<dbReference type="PaxDb" id="9606-ENSP00000356057"/>
<dbReference type="PeptideAtlas" id="Q9P2C4"/>
<dbReference type="ProteomicsDB" id="83769"/>
<dbReference type="Pumba" id="Q9P2C4"/>
<dbReference type="Antibodypedia" id="50333">
    <property type="antibodies" value="57 antibodies from 16 providers"/>
</dbReference>
<dbReference type="DNASU" id="57583"/>
<dbReference type="Ensembl" id="ENST00000367090.4">
    <molecule id="Q9P2C4-1"/>
    <property type="protein sequence ID" value="ENSP00000356057.4"/>
    <property type="gene ID" value="ENSG00000146433.11"/>
</dbReference>
<dbReference type="Ensembl" id="ENST00000684151.1">
    <molecule id="Q9P2C4-2"/>
    <property type="protein sequence ID" value="ENSP00000507085.1"/>
    <property type="gene ID" value="ENSG00000146433.11"/>
</dbReference>
<dbReference type="GeneID" id="57583"/>
<dbReference type="KEGG" id="hsa:57583"/>
<dbReference type="MANE-Select" id="ENST00000684151.1">
    <property type="protein sequence ID" value="ENSP00000507085.1"/>
    <property type="RefSeq nucleotide sequence ID" value="NM_001376852.1"/>
    <property type="RefSeq protein sequence ID" value="NP_001363781.1"/>
</dbReference>
<dbReference type="UCSC" id="uc003qrm.5">
    <molecule id="Q9P2C4-2"/>
    <property type="organism name" value="human"/>
</dbReference>
<dbReference type="AGR" id="HGNC:20958"/>
<dbReference type="CTD" id="57583"/>
<dbReference type="DisGeNET" id="57583"/>
<dbReference type="GeneCards" id="TMEM181"/>
<dbReference type="HGNC" id="HGNC:20958">
    <property type="gene designation" value="TMEM181"/>
</dbReference>
<dbReference type="HPA" id="ENSG00000146433">
    <property type="expression patterns" value="Low tissue specificity"/>
</dbReference>
<dbReference type="MIM" id="613209">
    <property type="type" value="gene"/>
</dbReference>
<dbReference type="neXtProt" id="NX_Q9P2C4"/>
<dbReference type="OpenTargets" id="ENSG00000146433"/>
<dbReference type="PharmGKB" id="PA162406036"/>
<dbReference type="VEuPathDB" id="HostDB:ENSG00000146433"/>
<dbReference type="eggNOG" id="ENOG502QPXU">
    <property type="taxonomic scope" value="Eukaryota"/>
</dbReference>
<dbReference type="GeneTree" id="ENSGT00390000007183"/>
<dbReference type="HOGENOM" id="CLU_040299_0_0_1"/>
<dbReference type="InParanoid" id="Q9P2C4"/>
<dbReference type="OMA" id="QLWVIAK"/>
<dbReference type="OrthoDB" id="28186at2759"/>
<dbReference type="PAN-GO" id="Q9P2C4">
    <property type="GO annotations" value="1 GO annotation based on evolutionary models"/>
</dbReference>
<dbReference type="PhylomeDB" id="Q9P2C4"/>
<dbReference type="TreeFam" id="TF324083"/>
<dbReference type="PathwayCommons" id="Q9P2C4"/>
<dbReference type="SignaLink" id="Q9P2C4"/>
<dbReference type="BioGRID-ORCS" id="57583">
    <property type="hits" value="10 hits in 1163 CRISPR screens"/>
</dbReference>
<dbReference type="ChiTaRS" id="TMEM181">
    <property type="organism name" value="human"/>
</dbReference>
<dbReference type="GenomeRNAi" id="57583"/>
<dbReference type="Pharos" id="Q9P2C4">
    <property type="development level" value="Tbio"/>
</dbReference>
<dbReference type="PRO" id="PR:Q9P2C4"/>
<dbReference type="Proteomes" id="UP000005640">
    <property type="component" value="Chromosome 6"/>
</dbReference>
<dbReference type="RNAct" id="Q9P2C4">
    <property type="molecule type" value="protein"/>
</dbReference>
<dbReference type="Bgee" id="ENSG00000146433">
    <property type="expression patterns" value="Expressed in pylorus and 194 other cell types or tissues"/>
</dbReference>
<dbReference type="GO" id="GO:0016020">
    <property type="term" value="C:membrane"/>
    <property type="evidence" value="ECO:0007669"/>
    <property type="project" value="UniProtKB-SubCell"/>
</dbReference>
<dbReference type="GO" id="GO:0015643">
    <property type="term" value="F:toxic substance binding"/>
    <property type="evidence" value="ECO:0000314"/>
    <property type="project" value="UniProtKB"/>
</dbReference>
<dbReference type="InterPro" id="IPR040416">
    <property type="entry name" value="TMEM181"/>
</dbReference>
<dbReference type="InterPro" id="IPR054077">
    <property type="entry name" value="TMEM181_GOLD"/>
</dbReference>
<dbReference type="InterPro" id="IPR047843">
    <property type="entry name" value="WLS-like_TM"/>
</dbReference>
<dbReference type="PANTHER" id="PTHR31918">
    <property type="entry name" value="TRANSMEMBRANE PROTEIN 181"/>
    <property type="match status" value="1"/>
</dbReference>
<dbReference type="PANTHER" id="PTHR31918:SF1">
    <property type="entry name" value="TRANSMEMBRANE PROTEIN 181"/>
    <property type="match status" value="1"/>
</dbReference>
<dbReference type="Pfam" id="PF21885">
    <property type="entry name" value="TMEM181_GOLD"/>
    <property type="match status" value="1"/>
</dbReference>
<dbReference type="Pfam" id="PF06664">
    <property type="entry name" value="WLS-like_TM"/>
    <property type="match status" value="1"/>
</dbReference>
<comment type="function">
    <text evidence="2">Mediates action of cytolethal distending toxins (CDT), which are secreted by many pathogenic bacteria. Expression level of TMEM181 is rate-limiting for intoxication.</text>
</comment>
<comment type="subunit">
    <text evidence="2">Interacts with cytolethal distending toxin.</text>
</comment>
<comment type="subcellular location">
    <subcellularLocation>
        <location evidence="3">Membrane</location>
        <topology evidence="3">Multi-pass membrane protein</topology>
    </subcellularLocation>
</comment>
<comment type="alternative products">
    <event type="alternative initiation"/>
    <isoform>
        <id>Q9P2C4-2</id>
        <name>2</name>
        <sequence type="displayed"/>
    </isoform>
    <isoform>
        <id>Q9P2C4-1</id>
        <name>1</name>
        <sequence type="described" ref="VSP_062201"/>
    </isoform>
</comment>
<comment type="similarity">
    <text evidence="3">Belongs to the TMEM181 family.</text>
</comment>
<comment type="sequence caution" evidence="3">
    <conflict type="erroneous initiation">
        <sequence resource="EMBL-CDS" id="BAA92661"/>
    </conflict>
    <text>Extended N-terminus.</text>
</comment>
<gene>
    <name type="primary">TMEM181</name>
    <name type="synonym">GPR178</name>
    <name type="synonym">KIAA1423</name>
</gene>
<accession>Q9P2C4</accession>
<accession>A0A804HII6</accession>
<accession>Q5VTU1</accession>
<reference key="1">
    <citation type="journal article" date="2000" name="DNA Res.">
        <title>Prediction of the coding sequences of unidentified human genes. XVI. The complete sequences of 150 new cDNA clones from brain which code for large proteins in vitro.</title>
        <authorList>
            <person name="Nagase T."/>
            <person name="Kikuno R."/>
            <person name="Ishikawa K."/>
            <person name="Hirosawa M."/>
            <person name="Ohara O."/>
        </authorList>
    </citation>
    <scope>NUCLEOTIDE SEQUENCE [LARGE SCALE MRNA] (ISOFORM 1)</scope>
    <source>
        <tissue>Brain</tissue>
    </source>
</reference>
<reference key="2">
    <citation type="journal article" date="2003" name="Nature">
        <title>The DNA sequence and analysis of human chromosome 6.</title>
        <authorList>
            <person name="Mungall A.J."/>
            <person name="Palmer S.A."/>
            <person name="Sims S.K."/>
            <person name="Edwards C.A."/>
            <person name="Ashurst J.L."/>
            <person name="Wilming L."/>
            <person name="Jones M.C."/>
            <person name="Horton R."/>
            <person name="Hunt S.E."/>
            <person name="Scott C.E."/>
            <person name="Gilbert J.G.R."/>
            <person name="Clamp M.E."/>
            <person name="Bethel G."/>
            <person name="Milne S."/>
            <person name="Ainscough R."/>
            <person name="Almeida J.P."/>
            <person name="Ambrose K.D."/>
            <person name="Andrews T.D."/>
            <person name="Ashwell R.I.S."/>
            <person name="Babbage A.K."/>
            <person name="Bagguley C.L."/>
            <person name="Bailey J."/>
            <person name="Banerjee R."/>
            <person name="Barker D.J."/>
            <person name="Barlow K.F."/>
            <person name="Bates K."/>
            <person name="Beare D.M."/>
            <person name="Beasley H."/>
            <person name="Beasley O."/>
            <person name="Bird C.P."/>
            <person name="Blakey S.E."/>
            <person name="Bray-Allen S."/>
            <person name="Brook J."/>
            <person name="Brown A.J."/>
            <person name="Brown J.Y."/>
            <person name="Burford D.C."/>
            <person name="Burrill W."/>
            <person name="Burton J."/>
            <person name="Carder C."/>
            <person name="Carter N.P."/>
            <person name="Chapman J.C."/>
            <person name="Clark S.Y."/>
            <person name="Clark G."/>
            <person name="Clee C.M."/>
            <person name="Clegg S."/>
            <person name="Cobley V."/>
            <person name="Collier R.E."/>
            <person name="Collins J.E."/>
            <person name="Colman L.K."/>
            <person name="Corby N.R."/>
            <person name="Coville G.J."/>
            <person name="Culley K.M."/>
            <person name="Dhami P."/>
            <person name="Davies J."/>
            <person name="Dunn M."/>
            <person name="Earthrowl M.E."/>
            <person name="Ellington A.E."/>
            <person name="Evans K.A."/>
            <person name="Faulkner L."/>
            <person name="Francis M.D."/>
            <person name="Frankish A."/>
            <person name="Frankland J."/>
            <person name="French L."/>
            <person name="Garner P."/>
            <person name="Garnett J."/>
            <person name="Ghori M.J."/>
            <person name="Gilby L.M."/>
            <person name="Gillson C.J."/>
            <person name="Glithero R.J."/>
            <person name="Grafham D.V."/>
            <person name="Grant M."/>
            <person name="Gribble S."/>
            <person name="Griffiths C."/>
            <person name="Griffiths M.N.D."/>
            <person name="Hall R."/>
            <person name="Halls K.S."/>
            <person name="Hammond S."/>
            <person name="Harley J.L."/>
            <person name="Hart E.A."/>
            <person name="Heath P.D."/>
            <person name="Heathcott R."/>
            <person name="Holmes S.J."/>
            <person name="Howden P.J."/>
            <person name="Howe K.L."/>
            <person name="Howell G.R."/>
            <person name="Huckle E."/>
            <person name="Humphray S.J."/>
            <person name="Humphries M.D."/>
            <person name="Hunt A.R."/>
            <person name="Johnson C.M."/>
            <person name="Joy A.A."/>
            <person name="Kay M."/>
            <person name="Keenan S.J."/>
            <person name="Kimberley A.M."/>
            <person name="King A."/>
            <person name="Laird G.K."/>
            <person name="Langford C."/>
            <person name="Lawlor S."/>
            <person name="Leongamornlert D.A."/>
            <person name="Leversha M."/>
            <person name="Lloyd C.R."/>
            <person name="Lloyd D.M."/>
            <person name="Loveland J.E."/>
            <person name="Lovell J."/>
            <person name="Martin S."/>
            <person name="Mashreghi-Mohammadi M."/>
            <person name="Maslen G.L."/>
            <person name="Matthews L."/>
            <person name="McCann O.T."/>
            <person name="McLaren S.J."/>
            <person name="McLay K."/>
            <person name="McMurray A."/>
            <person name="Moore M.J.F."/>
            <person name="Mullikin J.C."/>
            <person name="Niblett D."/>
            <person name="Nickerson T."/>
            <person name="Novik K.L."/>
            <person name="Oliver K."/>
            <person name="Overton-Larty E.K."/>
            <person name="Parker A."/>
            <person name="Patel R."/>
            <person name="Pearce A.V."/>
            <person name="Peck A.I."/>
            <person name="Phillimore B.J.C.T."/>
            <person name="Phillips S."/>
            <person name="Plumb R.W."/>
            <person name="Porter K.M."/>
            <person name="Ramsey Y."/>
            <person name="Ranby S.A."/>
            <person name="Rice C.M."/>
            <person name="Ross M.T."/>
            <person name="Searle S.M."/>
            <person name="Sehra H.K."/>
            <person name="Sheridan E."/>
            <person name="Skuce C.D."/>
            <person name="Smith S."/>
            <person name="Smith M."/>
            <person name="Spraggon L."/>
            <person name="Squares S.L."/>
            <person name="Steward C.A."/>
            <person name="Sycamore N."/>
            <person name="Tamlyn-Hall G."/>
            <person name="Tester J."/>
            <person name="Theaker A.J."/>
            <person name="Thomas D.W."/>
            <person name="Thorpe A."/>
            <person name="Tracey A."/>
            <person name="Tromans A."/>
            <person name="Tubby B."/>
            <person name="Wall M."/>
            <person name="Wallis J.M."/>
            <person name="West A.P."/>
            <person name="White S.S."/>
            <person name="Whitehead S.L."/>
            <person name="Whittaker H."/>
            <person name="Wild A."/>
            <person name="Willey D.J."/>
            <person name="Wilmer T.E."/>
            <person name="Wood J.M."/>
            <person name="Wray P.W."/>
            <person name="Wyatt J.C."/>
            <person name="Young L."/>
            <person name="Younger R.M."/>
            <person name="Bentley D.R."/>
            <person name="Coulson A."/>
            <person name="Durbin R.M."/>
            <person name="Hubbard T."/>
            <person name="Sulston J.E."/>
            <person name="Dunham I."/>
            <person name="Rogers J."/>
            <person name="Beck S."/>
        </authorList>
    </citation>
    <scope>NUCLEOTIDE SEQUENCE [LARGE SCALE GENOMIC DNA] (ISOFORM 2)</scope>
</reference>
<reference key="3">
    <citation type="journal article" date="2006" name="Cell">
        <title>Global, in vivo, and site-specific phosphorylation dynamics in signaling networks.</title>
        <authorList>
            <person name="Olsen J.V."/>
            <person name="Blagoev B."/>
            <person name="Gnad F."/>
            <person name="Macek B."/>
            <person name="Kumar C."/>
            <person name="Mortensen P."/>
            <person name="Mann M."/>
        </authorList>
    </citation>
    <scope>PHOSPHORYLATION [LARGE SCALE ANALYSIS] AT SER-443</scope>
    <scope>IDENTIFICATION BY MASS SPECTROMETRY [LARGE SCALE ANALYSIS]</scope>
    <source>
        <tissue>Cervix carcinoma</tissue>
    </source>
</reference>
<reference key="4">
    <citation type="journal article" date="2008" name="Mol. Cell">
        <title>Kinase-selective enrichment enables quantitative phosphoproteomics of the kinome across the cell cycle.</title>
        <authorList>
            <person name="Daub H."/>
            <person name="Olsen J.V."/>
            <person name="Bairlein M."/>
            <person name="Gnad F."/>
            <person name="Oppermann F.S."/>
            <person name="Korner R."/>
            <person name="Greff Z."/>
            <person name="Keri G."/>
            <person name="Stemmann O."/>
            <person name="Mann M."/>
        </authorList>
    </citation>
    <scope>PHOSPHORYLATION [LARGE SCALE ANALYSIS] AT SER-443</scope>
    <scope>IDENTIFICATION BY MASS SPECTROMETRY [LARGE SCALE ANALYSIS]</scope>
    <source>
        <tissue>Cervix carcinoma</tissue>
    </source>
</reference>
<reference key="5">
    <citation type="journal article" date="2009" name="Science">
        <title>Haploid genetic screens in human cells identify host factors used by pathogens.</title>
        <authorList>
            <person name="Carette J.E."/>
            <person name="Guimaraes C.P."/>
            <person name="Varadarajan M."/>
            <person name="Park A.S."/>
            <person name="Wuethrich I."/>
            <person name="Godarova A."/>
            <person name="Kotecki M."/>
            <person name="Cochran B.H."/>
            <person name="Spooner E."/>
            <person name="Ploegh H.L."/>
            <person name="Brummelkamp T.R."/>
        </authorList>
    </citation>
    <scope>FUNCTION</scope>
    <scope>INTERACTION WITH CYTOLETHAL DISTENDING TOXIN</scope>
</reference>
<reference key="6">
    <citation type="journal article" date="2010" name="Sci. Signal.">
        <title>Quantitative phosphoproteomics reveals widespread full phosphorylation site occupancy during mitosis.</title>
        <authorList>
            <person name="Olsen J.V."/>
            <person name="Vermeulen M."/>
            <person name="Santamaria A."/>
            <person name="Kumar C."/>
            <person name="Miller M.L."/>
            <person name="Jensen L.J."/>
            <person name="Gnad F."/>
            <person name="Cox J."/>
            <person name="Jensen T.S."/>
            <person name="Nigg E.A."/>
            <person name="Brunak S."/>
            <person name="Mann M."/>
        </authorList>
    </citation>
    <scope>PHOSPHORYLATION [LARGE SCALE ANALYSIS] AT SER-443</scope>
    <scope>IDENTIFICATION BY MASS SPECTROMETRY [LARGE SCALE ANALYSIS]</scope>
    <source>
        <tissue>Cervix carcinoma</tissue>
    </source>
</reference>
<reference key="7">
    <citation type="journal article" date="2011" name="BMC Syst. Biol.">
        <title>Initial characterization of the human central proteome.</title>
        <authorList>
            <person name="Burkard T.R."/>
            <person name="Planyavsky M."/>
            <person name="Kaupe I."/>
            <person name="Breitwieser F.P."/>
            <person name="Buerckstuemmer T."/>
            <person name="Bennett K.L."/>
            <person name="Superti-Furga G."/>
            <person name="Colinge J."/>
        </authorList>
    </citation>
    <scope>IDENTIFICATION BY MASS SPECTROMETRY [LARGE SCALE ANALYSIS]</scope>
</reference>